<proteinExistence type="evidence at protein level"/>
<evidence type="ECO:0000250" key="1">
    <source>
        <dbReference type="UniProtKB" id="P71335"/>
    </source>
</evidence>
<evidence type="ECO:0000255" key="2"/>
<evidence type="ECO:0000269" key="3">
    <source>
    </source>
</evidence>
<evidence type="ECO:0000269" key="4">
    <source>
    </source>
</evidence>
<evidence type="ECO:0000303" key="5">
    <source>
    </source>
</evidence>
<evidence type="ECO:0000305" key="6"/>
<evidence type="ECO:0000312" key="7">
    <source>
        <dbReference type="Araport" id="AT2G25870"/>
    </source>
</evidence>
<evidence type="ECO:0000312" key="8">
    <source>
        <dbReference type="EMBL" id="AEC07765.1"/>
    </source>
</evidence>
<gene>
    <name evidence="5" type="primary">YBEY</name>
    <name evidence="7" type="ordered locus">At2g25870</name>
    <name evidence="8" type="ORF">F17H15.10</name>
</gene>
<reference key="1">
    <citation type="journal article" date="1999" name="Nature">
        <title>Sequence and analysis of chromosome 2 of the plant Arabidopsis thaliana.</title>
        <authorList>
            <person name="Lin X."/>
            <person name="Kaul S."/>
            <person name="Rounsley S.D."/>
            <person name="Shea T.P."/>
            <person name="Benito M.-I."/>
            <person name="Town C.D."/>
            <person name="Fujii C.Y."/>
            <person name="Mason T.M."/>
            <person name="Bowman C.L."/>
            <person name="Barnstead M.E."/>
            <person name="Feldblyum T.V."/>
            <person name="Buell C.R."/>
            <person name="Ketchum K.A."/>
            <person name="Lee J.J."/>
            <person name="Ronning C.M."/>
            <person name="Koo H.L."/>
            <person name="Moffat K.S."/>
            <person name="Cronin L.A."/>
            <person name="Shen M."/>
            <person name="Pai G."/>
            <person name="Van Aken S."/>
            <person name="Umayam L."/>
            <person name="Tallon L.J."/>
            <person name="Gill J.E."/>
            <person name="Adams M.D."/>
            <person name="Carrera A.J."/>
            <person name="Creasy T.H."/>
            <person name="Goodman H.M."/>
            <person name="Somerville C.R."/>
            <person name="Copenhaver G.P."/>
            <person name="Preuss D."/>
            <person name="Nierman W.C."/>
            <person name="White O."/>
            <person name="Eisen J.A."/>
            <person name="Salzberg S.L."/>
            <person name="Fraser C.M."/>
            <person name="Venter J.C."/>
        </authorList>
    </citation>
    <scope>NUCLEOTIDE SEQUENCE [LARGE SCALE GENOMIC DNA]</scope>
    <source>
        <strain>cv. Columbia</strain>
    </source>
</reference>
<reference key="2">
    <citation type="journal article" date="2017" name="Plant J.">
        <title>Araport11: a complete reannotation of the Arabidopsis thaliana reference genome.</title>
        <authorList>
            <person name="Cheng C.Y."/>
            <person name="Krishnakumar V."/>
            <person name="Chan A.P."/>
            <person name="Thibaud-Nissen F."/>
            <person name="Schobel S."/>
            <person name="Town C.D."/>
        </authorList>
    </citation>
    <scope>GENOME REANNOTATION</scope>
    <source>
        <strain>cv. Columbia</strain>
    </source>
</reference>
<reference key="3">
    <citation type="journal article" date="2002" name="Science">
        <title>Functional annotation of a full-length Arabidopsis cDNA collection.</title>
        <authorList>
            <person name="Seki M."/>
            <person name="Narusaka M."/>
            <person name="Kamiya A."/>
            <person name="Ishida J."/>
            <person name="Satou M."/>
            <person name="Sakurai T."/>
            <person name="Nakajima M."/>
            <person name="Enju A."/>
            <person name="Akiyama K."/>
            <person name="Oono Y."/>
            <person name="Muramatsu M."/>
            <person name="Hayashizaki Y."/>
            <person name="Kawai J."/>
            <person name="Carninci P."/>
            <person name="Itoh M."/>
            <person name="Ishii Y."/>
            <person name="Arakawa T."/>
            <person name="Shibata K."/>
            <person name="Shinagawa A."/>
            <person name="Shinozaki K."/>
        </authorList>
    </citation>
    <scope>NUCLEOTIDE SEQUENCE [LARGE SCALE MRNA]</scope>
    <source>
        <strain>cv. Columbia</strain>
    </source>
</reference>
<reference key="4">
    <citation type="journal article" date="2003" name="Science">
        <title>Empirical analysis of transcriptional activity in the Arabidopsis genome.</title>
        <authorList>
            <person name="Yamada K."/>
            <person name="Lim J."/>
            <person name="Dale J.M."/>
            <person name="Chen H."/>
            <person name="Shinn P."/>
            <person name="Palm C.J."/>
            <person name="Southwick A.M."/>
            <person name="Wu H.C."/>
            <person name="Kim C.J."/>
            <person name="Nguyen M."/>
            <person name="Pham P.K."/>
            <person name="Cheuk R.F."/>
            <person name="Karlin-Newmann G."/>
            <person name="Liu S.X."/>
            <person name="Lam B."/>
            <person name="Sakano H."/>
            <person name="Wu T."/>
            <person name="Yu G."/>
            <person name="Miranda M."/>
            <person name="Quach H.L."/>
            <person name="Tripp M."/>
            <person name="Chang C.H."/>
            <person name="Lee J.M."/>
            <person name="Toriumi M.J."/>
            <person name="Chan M.M."/>
            <person name="Tang C.C."/>
            <person name="Onodera C.S."/>
            <person name="Deng J.M."/>
            <person name="Akiyama K."/>
            <person name="Ansari Y."/>
            <person name="Arakawa T."/>
            <person name="Banh J."/>
            <person name="Banno F."/>
            <person name="Bowser L."/>
            <person name="Brooks S.Y."/>
            <person name="Carninci P."/>
            <person name="Chao Q."/>
            <person name="Choy N."/>
            <person name="Enju A."/>
            <person name="Goldsmith A.D."/>
            <person name="Gurjal M."/>
            <person name="Hansen N.F."/>
            <person name="Hayashizaki Y."/>
            <person name="Johnson-Hopson C."/>
            <person name="Hsuan V.W."/>
            <person name="Iida K."/>
            <person name="Karnes M."/>
            <person name="Khan S."/>
            <person name="Koesema E."/>
            <person name="Ishida J."/>
            <person name="Jiang P.X."/>
            <person name="Jones T."/>
            <person name="Kawai J."/>
            <person name="Kamiya A."/>
            <person name="Meyers C."/>
            <person name="Nakajima M."/>
            <person name="Narusaka M."/>
            <person name="Seki M."/>
            <person name="Sakurai T."/>
            <person name="Satou M."/>
            <person name="Tamse R."/>
            <person name="Vaysberg M."/>
            <person name="Wallender E.K."/>
            <person name="Wong C."/>
            <person name="Yamamura Y."/>
            <person name="Yuan S."/>
            <person name="Shinozaki K."/>
            <person name="Davis R.W."/>
            <person name="Theologis A."/>
            <person name="Ecker J.R."/>
        </authorList>
    </citation>
    <scope>NUCLEOTIDE SEQUENCE [LARGE SCALE MRNA]</scope>
    <source>
        <strain>cv. Columbia</strain>
    </source>
</reference>
<reference key="5">
    <citation type="submission" date="2004-09" db="EMBL/GenBank/DDBJ databases">
        <title>Large-scale analysis of RIKEN Arabidopsis full-length (RAFL) cDNAs.</title>
        <authorList>
            <person name="Totoki Y."/>
            <person name="Seki M."/>
            <person name="Ishida J."/>
            <person name="Nakajima M."/>
            <person name="Enju A."/>
            <person name="Kamiya A."/>
            <person name="Narusaka M."/>
            <person name="Shin-i T."/>
            <person name="Nakagawa M."/>
            <person name="Sakamoto N."/>
            <person name="Oishi K."/>
            <person name="Kohara Y."/>
            <person name="Kobayashi M."/>
            <person name="Toyoda A."/>
            <person name="Sakaki Y."/>
            <person name="Sakurai T."/>
            <person name="Iida K."/>
            <person name="Akiyama K."/>
            <person name="Satou M."/>
            <person name="Toyoda T."/>
            <person name="Konagaya A."/>
            <person name="Carninci P."/>
            <person name="Kawai J."/>
            <person name="Hayashizaki Y."/>
            <person name="Shinozaki K."/>
        </authorList>
    </citation>
    <scope>NUCLEOTIDE SEQUENCE [LARGE SCALE MRNA]</scope>
    <source>
        <strain>cv. Columbia</strain>
    </source>
</reference>
<reference key="6">
    <citation type="submission" date="2007-03" db="EMBL/GenBank/DDBJ databases">
        <title>Arabidopsis ORF clones.</title>
        <authorList>
            <person name="Bautista V.R."/>
            <person name="Kim C.J."/>
            <person name="Chen H."/>
            <person name="Wu S.Y."/>
            <person name="De Los Reyes C."/>
            <person name="Ecker J.R."/>
        </authorList>
    </citation>
    <scope>NUCLEOTIDE SEQUENCE [LARGE SCALE MRNA]</scope>
    <source>
        <strain>cv. Columbia</strain>
    </source>
</reference>
<reference key="7">
    <citation type="journal article" date="2011" name="Proteomics">
        <title>Mining the soluble chloroplast proteome by affinity chromatography.</title>
        <authorList>
            <person name="Bayer R.G."/>
            <person name="Stael S."/>
            <person name="Csaszar E."/>
            <person name="Teige M."/>
        </authorList>
    </citation>
    <scope>IDENTIFICATION BY MASS SPECTROMETRY</scope>
    <scope>SUBCELLULAR LOCATION</scope>
</reference>
<reference key="8">
    <citation type="journal article" date="2015" name="Plant Physiol.">
        <title>The conserved endoribonuclease YbeY is required for chloroplast ribosomal RNA processing in Arabidopsis.</title>
        <authorList>
            <person name="Liu J."/>
            <person name="Zhou W."/>
            <person name="Liu G."/>
            <person name="Yang C."/>
            <person name="Sun Y."/>
            <person name="Wu W."/>
            <person name="Cao S."/>
            <person name="Wang C."/>
            <person name="Hai G."/>
            <person name="Wang Z."/>
            <person name="Bock R."/>
            <person name="Huang J."/>
            <person name="Cheng Y."/>
        </authorList>
    </citation>
    <scope>FUNCTION</scope>
    <scope>DISRUPTION PHENOTYPE</scope>
</reference>
<feature type="transit peptide" description="Chloroplast" evidence="2">
    <location>
        <begin position="1"/>
        <end position="50"/>
    </location>
</feature>
<feature type="chain" id="PRO_0000441901" description="Endoribonuclease YBEY, chloroplastic">
    <location>
        <begin position="51"/>
        <end position="584"/>
    </location>
</feature>
<feature type="binding site" evidence="1">
    <location>
        <position position="240"/>
    </location>
    <ligand>
        <name>Zn(2+)</name>
        <dbReference type="ChEBI" id="CHEBI:29105"/>
        <note>catalytic</note>
    </ligand>
</feature>
<feature type="binding site" evidence="1">
    <location>
        <position position="244"/>
    </location>
    <ligand>
        <name>Zn(2+)</name>
        <dbReference type="ChEBI" id="CHEBI:29105"/>
        <note>catalytic</note>
    </ligand>
</feature>
<feature type="binding site" evidence="1">
    <location>
        <position position="250"/>
    </location>
    <ligand>
        <name>Zn(2+)</name>
        <dbReference type="ChEBI" id="CHEBI:29105"/>
        <note>catalytic</note>
    </ligand>
</feature>
<sequence length="584" mass="65306">MLSRVCPTLRYNRIWSAHAREMPRATLLLLQPNFFHSSPKTALVNRLDVTSSEFSSMFRRSFHALRSTVGDWRKLPKPPGQVFAERREYRKIRRRAPKKKQELELSVSICIEEQLPDDLEIQNIAEMLRLNVPMAMTLAFNGLKDSKYKTRETDIEDLGGYETVELSVMLCNDDFICKLNKEWRGEDHATDVLSMSQHVPELKLPVLMMGDLVISVETAARQAAERGHTLLDEIRILVIHGLLHLLGFDHEISDEAEQEMEEEEELLLKNLGWKGKGLIQSAYDIQKTTTVQPEKSDDRKEGDGLRLYKPKFSYIFCDMDGTLLNSKSQISEANAKALKEALLRGLKVVIATGKSRPGAIRILKTADLTGSDGIISESSPGVFVQGLLVYGRQGKEVYRGNLDRDVCRETCLYSLEHRIPLIAFSQDRCLTLFDHPLVDSLHTIYNEPKAEIISSVDQLIAEADIQKVIFMDTTEGVSSVIRPYWSEATGDRANVVQAQSDMLEIVPPGTSKGNGVKMLLNHLGVSPDEIMAIGDGENDIEMLQLASLGVALSNGAEKTKAVADVIGVSNDQDGVADAIYRYAF</sequence>
<protein>
    <recommendedName>
        <fullName evidence="6">Endoribonuclease YBEY, chloroplastic</fullName>
        <ecNumber evidence="4">3.1.-.-</ecNumber>
    </recommendedName>
</protein>
<dbReference type="EC" id="3.1.-.-" evidence="4"/>
<dbReference type="EMBL" id="AC005395">
    <property type="protein sequence ID" value="AAC42244.1"/>
    <property type="status" value="ALT_SEQ"/>
    <property type="molecule type" value="Genomic_DNA"/>
</dbReference>
<dbReference type="EMBL" id="CP002685">
    <property type="protein sequence ID" value="AEC07765.1"/>
    <property type="molecule type" value="Genomic_DNA"/>
</dbReference>
<dbReference type="EMBL" id="AK118762">
    <property type="protein sequence ID" value="BAC43355.1"/>
    <property type="molecule type" value="mRNA"/>
</dbReference>
<dbReference type="EMBL" id="AY099804">
    <property type="protein sequence ID" value="AAM20655.1"/>
    <property type="molecule type" value="mRNA"/>
</dbReference>
<dbReference type="EMBL" id="AK176615">
    <property type="protein sequence ID" value="BAD44378.1"/>
    <property type="status" value="ALT_SEQ"/>
    <property type="molecule type" value="mRNA"/>
</dbReference>
<dbReference type="EMBL" id="BT030369">
    <property type="protein sequence ID" value="ABO38782.1"/>
    <property type="molecule type" value="mRNA"/>
</dbReference>
<dbReference type="PIR" id="F84653">
    <property type="entry name" value="F84653"/>
</dbReference>
<dbReference type="RefSeq" id="NP_850072.1">
    <property type="nucleotide sequence ID" value="NM_179741.2"/>
</dbReference>
<dbReference type="SMR" id="Q8L5Z4"/>
<dbReference type="FunCoup" id="Q8L5Z4">
    <property type="interactions" value="651"/>
</dbReference>
<dbReference type="STRING" id="3702.Q8L5Z4"/>
<dbReference type="PaxDb" id="3702-AT2G25870.1"/>
<dbReference type="ProteomicsDB" id="228571"/>
<dbReference type="EnsemblPlants" id="AT2G25870.1">
    <property type="protein sequence ID" value="AT2G25870.1"/>
    <property type="gene ID" value="AT2G25870"/>
</dbReference>
<dbReference type="GeneID" id="817128"/>
<dbReference type="Gramene" id="AT2G25870.1">
    <property type="protein sequence ID" value="AT2G25870.1"/>
    <property type="gene ID" value="AT2G25870"/>
</dbReference>
<dbReference type="KEGG" id="ath:AT2G25870"/>
<dbReference type="Araport" id="AT2G25870"/>
<dbReference type="TAIR" id="AT2G25870">
    <property type="gene designation" value="ATYBEY"/>
</dbReference>
<dbReference type="eggNOG" id="ENOG502S1YA">
    <property type="taxonomic scope" value="Eukaryota"/>
</dbReference>
<dbReference type="HOGENOM" id="CLU_024900_1_0_1"/>
<dbReference type="InParanoid" id="Q8L5Z4"/>
<dbReference type="OMA" id="KMRKRAP"/>
<dbReference type="PhylomeDB" id="Q8L5Z4"/>
<dbReference type="PRO" id="PR:Q8L5Z4"/>
<dbReference type="Proteomes" id="UP000006548">
    <property type="component" value="Chromosome 2"/>
</dbReference>
<dbReference type="ExpressionAtlas" id="Q8L5Z4">
    <property type="expression patterns" value="baseline and differential"/>
</dbReference>
<dbReference type="GO" id="GO:0009507">
    <property type="term" value="C:chloroplast"/>
    <property type="evidence" value="ECO:0000314"/>
    <property type="project" value="TAIR"/>
</dbReference>
<dbReference type="GO" id="GO:0009570">
    <property type="term" value="C:chloroplast stroma"/>
    <property type="evidence" value="ECO:0007669"/>
    <property type="project" value="UniProtKB-SubCell"/>
</dbReference>
<dbReference type="GO" id="GO:0046872">
    <property type="term" value="F:metal ion binding"/>
    <property type="evidence" value="ECO:0007669"/>
    <property type="project" value="UniProtKB-KW"/>
</dbReference>
<dbReference type="GO" id="GO:0004222">
    <property type="term" value="F:metalloendopeptidase activity"/>
    <property type="evidence" value="ECO:0007669"/>
    <property type="project" value="InterPro"/>
</dbReference>
<dbReference type="GO" id="GO:0004521">
    <property type="term" value="F:RNA endonuclease activity"/>
    <property type="evidence" value="ECO:0000314"/>
    <property type="project" value="TAIR"/>
</dbReference>
<dbReference type="GO" id="GO:0009658">
    <property type="term" value="P:chloroplast organization"/>
    <property type="evidence" value="ECO:0000315"/>
    <property type="project" value="TAIR"/>
</dbReference>
<dbReference type="GO" id="GO:1901259">
    <property type="term" value="P:chloroplast rRNA processing"/>
    <property type="evidence" value="ECO:0000315"/>
    <property type="project" value="TAIR"/>
</dbReference>
<dbReference type="CDD" id="cd07516">
    <property type="entry name" value="HAD_Pase"/>
    <property type="match status" value="1"/>
</dbReference>
<dbReference type="FunFam" id="3.30.1240.10:FF:000031">
    <property type="entry name" value="Sugar phosphatase YidA"/>
    <property type="match status" value="1"/>
</dbReference>
<dbReference type="FunFam" id="3.40.390.30:FF:000004">
    <property type="entry name" value="Sugar phosphatase YidA"/>
    <property type="match status" value="1"/>
</dbReference>
<dbReference type="Gene3D" id="3.30.1240.10">
    <property type="match status" value="1"/>
</dbReference>
<dbReference type="Gene3D" id="3.40.50.1000">
    <property type="entry name" value="HAD superfamily/HAD-like"/>
    <property type="match status" value="1"/>
</dbReference>
<dbReference type="Gene3D" id="3.40.390.30">
    <property type="entry name" value="Metalloproteases ('zincins'), catalytic domain"/>
    <property type="match status" value="1"/>
</dbReference>
<dbReference type="HAMAP" id="MF_00009">
    <property type="entry name" value="Endoribonucl_YbeY"/>
    <property type="match status" value="1"/>
</dbReference>
<dbReference type="InterPro" id="IPR000150">
    <property type="entry name" value="Cof"/>
</dbReference>
<dbReference type="InterPro" id="IPR036412">
    <property type="entry name" value="HAD-like_sf"/>
</dbReference>
<dbReference type="InterPro" id="IPR006379">
    <property type="entry name" value="HAD-SF_hydro_IIB"/>
</dbReference>
<dbReference type="InterPro" id="IPR023214">
    <property type="entry name" value="HAD_sf"/>
</dbReference>
<dbReference type="InterPro" id="IPR023091">
    <property type="entry name" value="MetalPrtase_cat_dom_sf_prd"/>
</dbReference>
<dbReference type="InterPro" id="IPR002036">
    <property type="entry name" value="YbeY"/>
</dbReference>
<dbReference type="InterPro" id="IPR020549">
    <property type="entry name" value="YbeY_CS"/>
</dbReference>
<dbReference type="NCBIfam" id="TIGR00099">
    <property type="entry name" value="Cof-subfamily"/>
    <property type="match status" value="1"/>
</dbReference>
<dbReference type="NCBIfam" id="TIGR01484">
    <property type="entry name" value="HAD-SF-IIB"/>
    <property type="match status" value="1"/>
</dbReference>
<dbReference type="NCBIfam" id="TIGR00043">
    <property type="entry name" value="rRNA maturation RNase YbeY"/>
    <property type="match status" value="1"/>
</dbReference>
<dbReference type="PANTHER" id="PTHR46986">
    <property type="entry name" value="ENDORIBONUCLEASE YBEY, CHLOROPLASTIC"/>
    <property type="match status" value="1"/>
</dbReference>
<dbReference type="PANTHER" id="PTHR46986:SF1">
    <property type="entry name" value="ENDORIBONUCLEASE YBEY, CHLOROPLASTIC"/>
    <property type="match status" value="1"/>
</dbReference>
<dbReference type="Pfam" id="PF08282">
    <property type="entry name" value="Hydrolase_3"/>
    <property type="match status" value="1"/>
</dbReference>
<dbReference type="Pfam" id="PF02130">
    <property type="entry name" value="YbeY"/>
    <property type="match status" value="1"/>
</dbReference>
<dbReference type="SFLD" id="SFLDG01140">
    <property type="entry name" value="C2.B:_Phosphomannomutase_and_P"/>
    <property type="match status" value="1"/>
</dbReference>
<dbReference type="SFLD" id="SFLDS00003">
    <property type="entry name" value="Haloacid_Dehalogenase"/>
    <property type="match status" value="1"/>
</dbReference>
<dbReference type="SUPFAM" id="SSF56784">
    <property type="entry name" value="HAD-like"/>
    <property type="match status" value="1"/>
</dbReference>
<dbReference type="SUPFAM" id="SSF55486">
    <property type="entry name" value="Metalloproteases ('zincins'), catalytic domain"/>
    <property type="match status" value="1"/>
</dbReference>
<dbReference type="PROSITE" id="PS01228">
    <property type="entry name" value="COF_1"/>
    <property type="match status" value="1"/>
</dbReference>
<dbReference type="PROSITE" id="PS01229">
    <property type="entry name" value="COF_2"/>
    <property type="match status" value="1"/>
</dbReference>
<dbReference type="PROSITE" id="PS01306">
    <property type="entry name" value="UPF0054"/>
    <property type="match status" value="1"/>
</dbReference>
<comment type="function">
    <text evidence="4">Endoribonuclease required for chloroplast ribosomal RNA (rRNA) processing and essential for normal growth and development. May be involved in maturation of both the 5' and 3' ends of 16S, 23S, and 4.5S rRNAs. Cleaves chloroplast rRNAs, mRNAs and tRNAs in vitro.</text>
</comment>
<comment type="cofactor">
    <cofactor evidence="1">
        <name>Zn(2+)</name>
        <dbReference type="ChEBI" id="CHEBI:29105"/>
    </cofactor>
    <text evidence="1">Binds 1 zinc ion.</text>
</comment>
<comment type="subcellular location">
    <subcellularLocation>
        <location evidence="3">Plastid</location>
        <location evidence="3">Chloroplast stroma</location>
    </subcellularLocation>
</comment>
<comment type="disruption phenotype">
    <text evidence="4">Seedling lethality.</text>
</comment>
<comment type="similarity">
    <text evidence="6">Belongs to the endoribonuclease YbeY family.</text>
</comment>
<comment type="sequence caution" evidence="6">
    <conflict type="erroneous gene model prediction">
        <sequence resource="EMBL-CDS" id="AAC42244"/>
    </conflict>
</comment>
<comment type="sequence caution" evidence="6">
    <conflict type="miscellaneous discrepancy">
        <sequence resource="EMBL-CDS" id="BAD44378"/>
    </conflict>
    <text>Sequencing errors.</text>
</comment>
<name>YBEY_ARATH</name>
<keyword id="KW-0150">Chloroplast</keyword>
<keyword id="KW-0255">Endonuclease</keyword>
<keyword id="KW-0378">Hydrolase</keyword>
<keyword id="KW-0479">Metal-binding</keyword>
<keyword id="KW-0540">Nuclease</keyword>
<keyword id="KW-0934">Plastid</keyword>
<keyword id="KW-1185">Reference proteome</keyword>
<keyword id="KW-0690">Ribosome biogenesis</keyword>
<keyword id="KW-0698">rRNA processing</keyword>
<keyword id="KW-0809">Transit peptide</keyword>
<keyword id="KW-0862">Zinc</keyword>
<accession>Q8L5Z4</accession>
<accession>O82311</accession>
<accession>Q67Y53</accession>
<organism>
    <name type="scientific">Arabidopsis thaliana</name>
    <name type="common">Mouse-ear cress</name>
    <dbReference type="NCBI Taxonomy" id="3702"/>
    <lineage>
        <taxon>Eukaryota</taxon>
        <taxon>Viridiplantae</taxon>
        <taxon>Streptophyta</taxon>
        <taxon>Embryophyta</taxon>
        <taxon>Tracheophyta</taxon>
        <taxon>Spermatophyta</taxon>
        <taxon>Magnoliopsida</taxon>
        <taxon>eudicotyledons</taxon>
        <taxon>Gunneridae</taxon>
        <taxon>Pentapetalae</taxon>
        <taxon>rosids</taxon>
        <taxon>malvids</taxon>
        <taxon>Brassicales</taxon>
        <taxon>Brassicaceae</taxon>
        <taxon>Camelineae</taxon>
        <taxon>Arabidopsis</taxon>
    </lineage>
</organism>